<name>PYRB_ACET2</name>
<sequence>MILKSKDLLGLKDLTAEEIQYILNTAKTMKVILLSKNKKAPHLQGKSIITLFYENSTRTRLSFELASKYLSANAANISVAASSVAKGETLIDTGKTIDMMGADVIVIRHSMSGAPHLLARNVKASVINAGDGMNEHPTQALLDMFTIIEKKGSLKGLKVAIIGDIYHSRVARSNIWGMTKLGAEVSVAGPSTLMPPELDKTGVKVFTTVQEALIDADVVMGLRIQKERQKSGLFPSLREYSRFFGLDEKRLKLAKEDALILHPGPVNRGVELPSSVIDSERSFINEQVTNGVAVRMALLYLLTRRDSGESVN</sequence>
<proteinExistence type="inferred from homology"/>
<keyword id="KW-0665">Pyrimidine biosynthesis</keyword>
<keyword id="KW-1185">Reference proteome</keyword>
<keyword id="KW-0808">Transferase</keyword>
<comment type="function">
    <text evidence="1">Catalyzes the condensation of carbamoyl phosphate and aspartate to form carbamoyl aspartate and inorganic phosphate, the committed step in the de novo pyrimidine nucleotide biosynthesis pathway.</text>
</comment>
<comment type="catalytic activity">
    <reaction evidence="1">
        <text>carbamoyl phosphate + L-aspartate = N-carbamoyl-L-aspartate + phosphate + H(+)</text>
        <dbReference type="Rhea" id="RHEA:20013"/>
        <dbReference type="ChEBI" id="CHEBI:15378"/>
        <dbReference type="ChEBI" id="CHEBI:29991"/>
        <dbReference type="ChEBI" id="CHEBI:32814"/>
        <dbReference type="ChEBI" id="CHEBI:43474"/>
        <dbReference type="ChEBI" id="CHEBI:58228"/>
        <dbReference type="EC" id="2.1.3.2"/>
    </reaction>
</comment>
<comment type="pathway">
    <text evidence="1">Pyrimidine metabolism; UMP biosynthesis via de novo pathway; (S)-dihydroorotate from bicarbonate: step 2/3.</text>
</comment>
<comment type="subunit">
    <text evidence="1">Heterododecamer (2C3:3R2) of six catalytic PyrB chains organized as two trimers (C3), and six regulatory PyrI chains organized as three dimers (R2).</text>
</comment>
<comment type="similarity">
    <text evidence="1">Belongs to the aspartate/ornithine carbamoyltransferase superfamily. ATCase family.</text>
</comment>
<gene>
    <name evidence="1" type="primary">pyrB</name>
    <name type="ordered locus">Cthe_0953</name>
</gene>
<organism>
    <name type="scientific">Acetivibrio thermocellus (strain ATCC 27405 / DSM 1237 / JCM 9322 / NBRC 103400 / NCIMB 10682 / NRRL B-4536 / VPI 7372)</name>
    <name type="common">Clostridium thermocellum</name>
    <dbReference type="NCBI Taxonomy" id="203119"/>
    <lineage>
        <taxon>Bacteria</taxon>
        <taxon>Bacillati</taxon>
        <taxon>Bacillota</taxon>
        <taxon>Clostridia</taxon>
        <taxon>Eubacteriales</taxon>
        <taxon>Oscillospiraceae</taxon>
        <taxon>Acetivibrio</taxon>
    </lineage>
</organism>
<dbReference type="EC" id="2.1.3.2" evidence="1"/>
<dbReference type="EMBL" id="CP000568">
    <property type="protein sequence ID" value="ABN52187.1"/>
    <property type="molecule type" value="Genomic_DNA"/>
</dbReference>
<dbReference type="RefSeq" id="WP_003518639.1">
    <property type="nucleotide sequence ID" value="NC_009012.1"/>
</dbReference>
<dbReference type="SMR" id="A3DE08"/>
<dbReference type="STRING" id="203119.Cthe_0953"/>
<dbReference type="GeneID" id="35804315"/>
<dbReference type="KEGG" id="cth:Cthe_0953"/>
<dbReference type="eggNOG" id="COG0540">
    <property type="taxonomic scope" value="Bacteria"/>
</dbReference>
<dbReference type="HOGENOM" id="CLU_043846_2_0_9"/>
<dbReference type="OrthoDB" id="9774690at2"/>
<dbReference type="UniPathway" id="UPA00070">
    <property type="reaction ID" value="UER00116"/>
</dbReference>
<dbReference type="Proteomes" id="UP000002145">
    <property type="component" value="Chromosome"/>
</dbReference>
<dbReference type="GO" id="GO:0005829">
    <property type="term" value="C:cytosol"/>
    <property type="evidence" value="ECO:0007669"/>
    <property type="project" value="TreeGrafter"/>
</dbReference>
<dbReference type="GO" id="GO:0016597">
    <property type="term" value="F:amino acid binding"/>
    <property type="evidence" value="ECO:0007669"/>
    <property type="project" value="InterPro"/>
</dbReference>
<dbReference type="GO" id="GO:0004070">
    <property type="term" value="F:aspartate carbamoyltransferase activity"/>
    <property type="evidence" value="ECO:0007669"/>
    <property type="project" value="UniProtKB-UniRule"/>
</dbReference>
<dbReference type="GO" id="GO:0006207">
    <property type="term" value="P:'de novo' pyrimidine nucleobase biosynthetic process"/>
    <property type="evidence" value="ECO:0007669"/>
    <property type="project" value="InterPro"/>
</dbReference>
<dbReference type="GO" id="GO:0044205">
    <property type="term" value="P:'de novo' UMP biosynthetic process"/>
    <property type="evidence" value="ECO:0007669"/>
    <property type="project" value="UniProtKB-UniRule"/>
</dbReference>
<dbReference type="GO" id="GO:0006520">
    <property type="term" value="P:amino acid metabolic process"/>
    <property type="evidence" value="ECO:0007669"/>
    <property type="project" value="InterPro"/>
</dbReference>
<dbReference type="FunFam" id="3.40.50.1370:FF:000007">
    <property type="entry name" value="Aspartate carbamoyltransferase"/>
    <property type="match status" value="1"/>
</dbReference>
<dbReference type="Gene3D" id="3.40.50.1370">
    <property type="entry name" value="Aspartate/ornithine carbamoyltransferase"/>
    <property type="match status" value="2"/>
</dbReference>
<dbReference type="HAMAP" id="MF_00001">
    <property type="entry name" value="Asp_carb_tr"/>
    <property type="match status" value="1"/>
</dbReference>
<dbReference type="InterPro" id="IPR006132">
    <property type="entry name" value="Asp/Orn_carbamoyltranf_P-bd"/>
</dbReference>
<dbReference type="InterPro" id="IPR006130">
    <property type="entry name" value="Asp/Orn_carbamoylTrfase"/>
</dbReference>
<dbReference type="InterPro" id="IPR036901">
    <property type="entry name" value="Asp/Orn_carbamoylTrfase_sf"/>
</dbReference>
<dbReference type="InterPro" id="IPR002082">
    <property type="entry name" value="Asp_carbamoyltransf"/>
</dbReference>
<dbReference type="InterPro" id="IPR006131">
    <property type="entry name" value="Asp_carbamoyltransf_Asp/Orn-bd"/>
</dbReference>
<dbReference type="NCBIfam" id="TIGR00670">
    <property type="entry name" value="asp_carb_tr"/>
    <property type="match status" value="1"/>
</dbReference>
<dbReference type="NCBIfam" id="NF002032">
    <property type="entry name" value="PRK00856.1"/>
    <property type="match status" value="1"/>
</dbReference>
<dbReference type="PANTHER" id="PTHR45753:SF6">
    <property type="entry name" value="ASPARTATE CARBAMOYLTRANSFERASE"/>
    <property type="match status" value="1"/>
</dbReference>
<dbReference type="PANTHER" id="PTHR45753">
    <property type="entry name" value="ORNITHINE CARBAMOYLTRANSFERASE, MITOCHONDRIAL"/>
    <property type="match status" value="1"/>
</dbReference>
<dbReference type="Pfam" id="PF00185">
    <property type="entry name" value="OTCace"/>
    <property type="match status" value="1"/>
</dbReference>
<dbReference type="Pfam" id="PF02729">
    <property type="entry name" value="OTCace_N"/>
    <property type="match status" value="1"/>
</dbReference>
<dbReference type="PRINTS" id="PR00100">
    <property type="entry name" value="AOTCASE"/>
</dbReference>
<dbReference type="PRINTS" id="PR00101">
    <property type="entry name" value="ATCASE"/>
</dbReference>
<dbReference type="SUPFAM" id="SSF53671">
    <property type="entry name" value="Aspartate/ornithine carbamoyltransferase"/>
    <property type="match status" value="1"/>
</dbReference>
<dbReference type="PROSITE" id="PS00097">
    <property type="entry name" value="CARBAMOYLTRANSFERASE"/>
    <property type="match status" value="1"/>
</dbReference>
<protein>
    <recommendedName>
        <fullName evidence="1">Aspartate carbamoyltransferase catalytic subunit</fullName>
        <ecNumber evidence="1">2.1.3.2</ecNumber>
    </recommendedName>
    <alternativeName>
        <fullName evidence="1">Aspartate transcarbamylase</fullName>
        <shortName evidence="1">ATCase</shortName>
    </alternativeName>
</protein>
<feature type="chain" id="PRO_1000000007" description="Aspartate carbamoyltransferase catalytic subunit">
    <location>
        <begin position="1"/>
        <end position="312"/>
    </location>
</feature>
<feature type="binding site" evidence="1">
    <location>
        <position position="58"/>
    </location>
    <ligand>
        <name>carbamoyl phosphate</name>
        <dbReference type="ChEBI" id="CHEBI:58228"/>
    </ligand>
</feature>
<feature type="binding site" evidence="1">
    <location>
        <position position="59"/>
    </location>
    <ligand>
        <name>carbamoyl phosphate</name>
        <dbReference type="ChEBI" id="CHEBI:58228"/>
    </ligand>
</feature>
<feature type="binding site" evidence="1">
    <location>
        <position position="86"/>
    </location>
    <ligand>
        <name>L-aspartate</name>
        <dbReference type="ChEBI" id="CHEBI:29991"/>
    </ligand>
</feature>
<feature type="binding site" evidence="1">
    <location>
        <position position="108"/>
    </location>
    <ligand>
        <name>carbamoyl phosphate</name>
        <dbReference type="ChEBI" id="CHEBI:58228"/>
    </ligand>
</feature>
<feature type="binding site" evidence="1">
    <location>
        <position position="136"/>
    </location>
    <ligand>
        <name>carbamoyl phosphate</name>
        <dbReference type="ChEBI" id="CHEBI:58228"/>
    </ligand>
</feature>
<feature type="binding site" evidence="1">
    <location>
        <position position="139"/>
    </location>
    <ligand>
        <name>carbamoyl phosphate</name>
        <dbReference type="ChEBI" id="CHEBI:58228"/>
    </ligand>
</feature>
<feature type="binding site" evidence="1">
    <location>
        <position position="169"/>
    </location>
    <ligand>
        <name>L-aspartate</name>
        <dbReference type="ChEBI" id="CHEBI:29991"/>
    </ligand>
</feature>
<feature type="binding site" evidence="1">
    <location>
        <position position="223"/>
    </location>
    <ligand>
        <name>L-aspartate</name>
        <dbReference type="ChEBI" id="CHEBI:29991"/>
    </ligand>
</feature>
<feature type="binding site" evidence="1">
    <location>
        <position position="264"/>
    </location>
    <ligand>
        <name>carbamoyl phosphate</name>
        <dbReference type="ChEBI" id="CHEBI:58228"/>
    </ligand>
</feature>
<feature type="binding site" evidence="1">
    <location>
        <position position="265"/>
    </location>
    <ligand>
        <name>carbamoyl phosphate</name>
        <dbReference type="ChEBI" id="CHEBI:58228"/>
    </ligand>
</feature>
<accession>A3DE08</accession>
<evidence type="ECO:0000255" key="1">
    <source>
        <dbReference type="HAMAP-Rule" id="MF_00001"/>
    </source>
</evidence>
<reference key="1">
    <citation type="submission" date="2007-02" db="EMBL/GenBank/DDBJ databases">
        <title>Complete sequence of Clostridium thermocellum ATCC 27405.</title>
        <authorList>
            <consortium name="US DOE Joint Genome Institute"/>
            <person name="Copeland A."/>
            <person name="Lucas S."/>
            <person name="Lapidus A."/>
            <person name="Barry K."/>
            <person name="Detter J.C."/>
            <person name="Glavina del Rio T."/>
            <person name="Hammon N."/>
            <person name="Israni S."/>
            <person name="Dalin E."/>
            <person name="Tice H."/>
            <person name="Pitluck S."/>
            <person name="Chertkov O."/>
            <person name="Brettin T."/>
            <person name="Bruce D."/>
            <person name="Han C."/>
            <person name="Tapia R."/>
            <person name="Gilna P."/>
            <person name="Schmutz J."/>
            <person name="Larimer F."/>
            <person name="Land M."/>
            <person name="Hauser L."/>
            <person name="Kyrpides N."/>
            <person name="Mikhailova N."/>
            <person name="Wu J.H.D."/>
            <person name="Newcomb M."/>
            <person name="Richardson P."/>
        </authorList>
    </citation>
    <scope>NUCLEOTIDE SEQUENCE [LARGE SCALE GENOMIC DNA]</scope>
    <source>
        <strain>ATCC 27405 / DSM 1237 / JCM 9322 / NBRC 103400 / NCIMB 10682 / NRRL B-4536 / VPI 7372</strain>
    </source>
</reference>